<keyword id="KW-0066">ATP synthesis</keyword>
<keyword id="KW-0139">CF(1)</keyword>
<keyword id="KW-0150">Chloroplast</keyword>
<keyword id="KW-0375">Hydrogen ion transport</keyword>
<keyword id="KW-0406">Ion transport</keyword>
<keyword id="KW-0472">Membrane</keyword>
<keyword id="KW-0934">Plastid</keyword>
<keyword id="KW-0793">Thylakoid</keyword>
<keyword id="KW-0813">Transport</keyword>
<accession>O78476</accession>
<geneLocation type="chloroplast"/>
<sequence length="185" mass="20219">MIAMNNKLAQPYAMAFLEFSLDAKQTLDTTIADLTQIKTILHDSVDLSKTLSNPLLSIKAKKEVIKAIFEPNISKNTLKFLLVLCDRGRSANLSSIIDNTIELAYKKASIEIAYVTTATAFSSNQQEALVEKLKSMTSTEQIKLNITVDKTLIGGFKVQIGSKVIDTSIQGQLRQLASHLGSSAI</sequence>
<proteinExistence type="inferred from homology"/>
<reference key="1">
    <citation type="journal article" date="1999" name="J. Phycol.">
        <title>The atpA gene cluster of a cryptomonad, Guillardia theta: a piece in the puzzle of chloroplast genome development.</title>
        <authorList>
            <person name="Leitsch C.E.W."/>
            <person name="Kowallik K.V."/>
            <person name="Douglas S.E."/>
        </authorList>
    </citation>
    <scope>NUCLEOTIDE SEQUENCE [GENOMIC DNA]</scope>
</reference>
<reference key="2">
    <citation type="journal article" date="1999" name="J. Mol. Evol.">
        <title>The plastid genome of the cryptophyte alga, Guillardia theta: complete sequence and conserved synteny groups confirm its common ancestry with red algae.</title>
        <authorList>
            <person name="Douglas S.E."/>
            <person name="Penny S.L."/>
        </authorList>
    </citation>
    <scope>NUCLEOTIDE SEQUENCE [LARGE SCALE GENOMIC DNA]</scope>
</reference>
<gene>
    <name evidence="1" type="primary">atpD</name>
</gene>
<dbReference type="EMBL" id="AF041468">
    <property type="protein sequence ID" value="AAC35667.1"/>
    <property type="molecule type" value="Genomic_DNA"/>
</dbReference>
<dbReference type="RefSeq" id="NP_050733.1">
    <property type="nucleotide sequence ID" value="NC_000926.1"/>
</dbReference>
<dbReference type="SMR" id="O78476"/>
<dbReference type="GeneID" id="857038"/>
<dbReference type="HOGENOM" id="CLU_085114_4_1_1"/>
<dbReference type="OMA" id="SKMIDMS"/>
<dbReference type="GO" id="GO:0009535">
    <property type="term" value="C:chloroplast thylakoid membrane"/>
    <property type="evidence" value="ECO:0007669"/>
    <property type="project" value="UniProtKB-SubCell"/>
</dbReference>
<dbReference type="GO" id="GO:0045259">
    <property type="term" value="C:proton-transporting ATP synthase complex"/>
    <property type="evidence" value="ECO:0007669"/>
    <property type="project" value="UniProtKB-KW"/>
</dbReference>
<dbReference type="GO" id="GO:0046933">
    <property type="term" value="F:proton-transporting ATP synthase activity, rotational mechanism"/>
    <property type="evidence" value="ECO:0007669"/>
    <property type="project" value="UniProtKB-UniRule"/>
</dbReference>
<dbReference type="Gene3D" id="1.10.520.20">
    <property type="entry name" value="N-terminal domain of the delta subunit of the F1F0-ATP synthase"/>
    <property type="match status" value="1"/>
</dbReference>
<dbReference type="HAMAP" id="MF_01416">
    <property type="entry name" value="ATP_synth_delta_bact"/>
    <property type="match status" value="1"/>
</dbReference>
<dbReference type="InterPro" id="IPR026015">
    <property type="entry name" value="ATP_synth_OSCP/delta_N_sf"/>
</dbReference>
<dbReference type="InterPro" id="IPR020781">
    <property type="entry name" value="ATPase_OSCP/d_CS"/>
</dbReference>
<dbReference type="InterPro" id="IPR000711">
    <property type="entry name" value="ATPase_OSCP/dsu"/>
</dbReference>
<dbReference type="NCBIfam" id="TIGR01145">
    <property type="entry name" value="ATP_synt_delta"/>
    <property type="match status" value="1"/>
</dbReference>
<dbReference type="PANTHER" id="PTHR11910">
    <property type="entry name" value="ATP SYNTHASE DELTA CHAIN"/>
    <property type="match status" value="1"/>
</dbReference>
<dbReference type="Pfam" id="PF00213">
    <property type="entry name" value="OSCP"/>
    <property type="match status" value="1"/>
</dbReference>
<dbReference type="PRINTS" id="PR00125">
    <property type="entry name" value="ATPASEDELTA"/>
</dbReference>
<dbReference type="SUPFAM" id="SSF47928">
    <property type="entry name" value="N-terminal domain of the delta subunit of the F1F0-ATP synthase"/>
    <property type="match status" value="1"/>
</dbReference>
<dbReference type="PROSITE" id="PS00389">
    <property type="entry name" value="ATPASE_DELTA"/>
    <property type="match status" value="1"/>
</dbReference>
<feature type="chain" id="PRO_0000193502" description="ATP synthase subunit delta, chloroplastic">
    <location>
        <begin position="1"/>
        <end position="185"/>
    </location>
</feature>
<comment type="function">
    <text evidence="1">F(1)F(0) ATP synthase produces ATP from ADP in the presence of a proton or sodium gradient. F-type ATPases consist of two structural domains, F(1) containing the extramembraneous catalytic core and F(0) containing the membrane proton channel, linked together by a central stalk and a peripheral stalk. During catalysis, ATP synthesis in the catalytic domain of F(1) is coupled via a rotary mechanism of the central stalk subunits to proton translocation.</text>
</comment>
<comment type="function">
    <text evidence="1">This protein is part of the stalk that links CF(0) to CF(1). It either transmits conformational changes from CF(0) to CF(1) or is implicated in proton conduction.</text>
</comment>
<comment type="subunit">
    <text evidence="1">F-type ATPases have 2 components, F(1) - the catalytic core - and F(0) - the membrane proton channel. F(1) has five subunits: alpha(3), beta(3), gamma(1), delta(1), epsilon(1). CF(0) has four main subunits: a(1), b(1), b'(1) and c(10-14). The alpha and beta chains form an alternating ring which encloses part of the gamma chain. F(1) is attached to F(0) by a central stalk formed by the gamma and epsilon chains, while a peripheral stalk is formed by the delta, b and b' chains.</text>
</comment>
<comment type="subcellular location">
    <subcellularLocation>
        <location evidence="1">Plastid</location>
        <location evidence="1">Chloroplast thylakoid membrane</location>
        <topology evidence="1">Peripheral membrane protein</topology>
    </subcellularLocation>
</comment>
<comment type="similarity">
    <text evidence="1">Belongs to the ATPase delta chain family.</text>
</comment>
<protein>
    <recommendedName>
        <fullName evidence="1">ATP synthase subunit delta, chloroplastic</fullName>
    </recommendedName>
    <alternativeName>
        <fullName evidence="1">ATP synthase F(1) sector subunit delta</fullName>
    </alternativeName>
    <alternativeName>
        <fullName evidence="1">F-type ATPase subunit delta</fullName>
    </alternativeName>
</protein>
<evidence type="ECO:0000255" key="1">
    <source>
        <dbReference type="HAMAP-Rule" id="MF_01416"/>
    </source>
</evidence>
<name>ATPD_GUITH</name>
<organism>
    <name type="scientific">Guillardia theta</name>
    <name type="common">Cryptophyte</name>
    <name type="synonym">Cryptomonas phi</name>
    <dbReference type="NCBI Taxonomy" id="55529"/>
    <lineage>
        <taxon>Eukaryota</taxon>
        <taxon>Cryptophyceae</taxon>
        <taxon>Pyrenomonadales</taxon>
        <taxon>Geminigeraceae</taxon>
        <taxon>Guillardia</taxon>
    </lineage>
</organism>